<evidence type="ECO:0000255" key="1">
    <source>
        <dbReference type="HAMAP-Rule" id="MF_01001"/>
    </source>
</evidence>
<comment type="function">
    <text evidence="1">Catalyzes the synthesis of Und-PP-GlcNAc-ManNAcA (Lipid II), the second lipid-linked intermediate involved in enterobacterial common antigen (ECA) synthesis.</text>
</comment>
<comment type="catalytic activity">
    <reaction evidence="1">
        <text>UDP-N-acetyl-alpha-D-mannosaminouronate + N-acetyl-alpha-D-glucosaminyl-di-trans,octa-cis-undecaprenyl diphosphate = beta-D-ManNAcA-(1-&gt;4)-alpha-D-GlcNAc-di-trans,octa-cis-undecaprenyl diphosphate + UDP + H(+)</text>
        <dbReference type="Rhea" id="RHEA:28366"/>
        <dbReference type="ChEBI" id="CHEBI:15378"/>
        <dbReference type="ChEBI" id="CHEBI:58223"/>
        <dbReference type="ChEBI" id="CHEBI:61495"/>
        <dbReference type="ChEBI" id="CHEBI:62959"/>
        <dbReference type="ChEBI" id="CHEBI:70731"/>
        <dbReference type="EC" id="2.4.1.180"/>
    </reaction>
</comment>
<comment type="pathway">
    <text evidence="1">Bacterial outer membrane biogenesis; enterobacterial common antigen biosynthesis.</text>
</comment>
<comment type="similarity">
    <text evidence="1">Belongs to the glycosyltransferase 26 family.</text>
</comment>
<feature type="chain" id="PRO_1000062736" description="UDP-N-acetyl-D-mannosaminuronic acid transferase">
    <location>
        <begin position="1"/>
        <end position="246"/>
    </location>
</feature>
<sequence length="246" mass="27676">MEPNTVIPKYNVRGFEIWGFRDMAQVLDHLLGSGPVKTGTLVAMNAEKLLKAEDDTALCELIKNAEYLYADGISMVRAIRRKYPQAELSRVAGADLWEALMQRAGQQGTPVFLVGGKPDVLAETEAKLRAQWNVNLVGSQDGYFTPEQREALFARIAASGAAIVTVAMGSPKQEIFMRDCRKFYPDALYMGVGGTYDVFTSHVKRAPKIWQNMGLEWLYRLLAQPSRIRRQLKLLKFVGYYYSGRL</sequence>
<keyword id="KW-0328">Glycosyltransferase</keyword>
<keyword id="KW-0808">Transferase</keyword>
<accession>Q1CBP0</accession>
<organism>
    <name type="scientific">Yersinia pestis bv. Antiqua (strain Antiqua)</name>
    <dbReference type="NCBI Taxonomy" id="360102"/>
    <lineage>
        <taxon>Bacteria</taxon>
        <taxon>Pseudomonadati</taxon>
        <taxon>Pseudomonadota</taxon>
        <taxon>Gammaproteobacteria</taxon>
        <taxon>Enterobacterales</taxon>
        <taxon>Yersiniaceae</taxon>
        <taxon>Yersinia</taxon>
    </lineage>
</organism>
<gene>
    <name evidence="1" type="primary">wecG</name>
    <name evidence="1" type="synonym">rffM</name>
    <name type="ordered locus">YPA_0163</name>
</gene>
<protein>
    <recommendedName>
        <fullName evidence="1">UDP-N-acetyl-D-mannosaminuronic acid transferase</fullName>
        <shortName evidence="1">UDP-ManNAcA transferase</shortName>
        <ecNumber evidence="1">2.4.1.180</ecNumber>
    </recommendedName>
</protein>
<name>WECG_YERPA</name>
<reference key="1">
    <citation type="journal article" date="2006" name="J. Bacteriol.">
        <title>Complete genome sequence of Yersinia pestis strains Antiqua and Nepal516: evidence of gene reduction in an emerging pathogen.</title>
        <authorList>
            <person name="Chain P.S.G."/>
            <person name="Hu P."/>
            <person name="Malfatti S.A."/>
            <person name="Radnedge L."/>
            <person name="Larimer F."/>
            <person name="Vergez L.M."/>
            <person name="Worsham P."/>
            <person name="Chu M.C."/>
            <person name="Andersen G.L."/>
        </authorList>
    </citation>
    <scope>NUCLEOTIDE SEQUENCE [LARGE SCALE GENOMIC DNA]</scope>
    <source>
        <strain>Antiqua</strain>
    </source>
</reference>
<dbReference type="EC" id="2.4.1.180" evidence="1"/>
<dbReference type="EMBL" id="CP000308">
    <property type="protein sequence ID" value="ABG12132.1"/>
    <property type="molecule type" value="Genomic_DNA"/>
</dbReference>
<dbReference type="RefSeq" id="WP_002211977.1">
    <property type="nucleotide sequence ID" value="NZ_CP009906.1"/>
</dbReference>
<dbReference type="SMR" id="Q1CBP0"/>
<dbReference type="CAZy" id="GT26">
    <property type="family name" value="Glycosyltransferase Family 26"/>
</dbReference>
<dbReference type="GeneID" id="57974848"/>
<dbReference type="KEGG" id="ypa:YPA_0163"/>
<dbReference type="UniPathway" id="UPA00566"/>
<dbReference type="Proteomes" id="UP000001971">
    <property type="component" value="Chromosome"/>
</dbReference>
<dbReference type="GO" id="GO:0047241">
    <property type="term" value="F:lipopolysaccharide N-acetylmannosaminouronosyltransferase activity"/>
    <property type="evidence" value="ECO:0007669"/>
    <property type="project" value="UniProtKB-UniRule"/>
</dbReference>
<dbReference type="GO" id="GO:0009246">
    <property type="term" value="P:enterobacterial common antigen biosynthetic process"/>
    <property type="evidence" value="ECO:0007669"/>
    <property type="project" value="UniProtKB-UniRule"/>
</dbReference>
<dbReference type="CDD" id="cd06533">
    <property type="entry name" value="Glyco_transf_WecG_TagA"/>
    <property type="match status" value="1"/>
</dbReference>
<dbReference type="HAMAP" id="MF_01001">
    <property type="entry name" value="WecG_RffM"/>
    <property type="match status" value="1"/>
</dbReference>
<dbReference type="InterPro" id="IPR023085">
    <property type="entry name" value="UDP-ManNAcA_Trfase_WecG"/>
</dbReference>
<dbReference type="InterPro" id="IPR004629">
    <property type="entry name" value="WecG_TagA_CpsF"/>
</dbReference>
<dbReference type="NCBIfam" id="NF002980">
    <property type="entry name" value="PRK03692.1"/>
    <property type="match status" value="1"/>
</dbReference>
<dbReference type="NCBIfam" id="TIGR00696">
    <property type="entry name" value="wecG_tagA_cpsF"/>
    <property type="match status" value="1"/>
</dbReference>
<dbReference type="PANTHER" id="PTHR34136">
    <property type="match status" value="1"/>
</dbReference>
<dbReference type="PANTHER" id="PTHR34136:SF1">
    <property type="entry name" value="UDP-N-ACETYL-D-MANNOSAMINURONIC ACID TRANSFERASE"/>
    <property type="match status" value="1"/>
</dbReference>
<dbReference type="Pfam" id="PF03808">
    <property type="entry name" value="Glyco_tran_WecG"/>
    <property type="match status" value="1"/>
</dbReference>
<proteinExistence type="inferred from homology"/>